<organism>
    <name type="scientific">Shewanella denitrificans (strain OS217 / ATCC BAA-1090 / DSM 15013)</name>
    <dbReference type="NCBI Taxonomy" id="318161"/>
    <lineage>
        <taxon>Bacteria</taxon>
        <taxon>Pseudomonadati</taxon>
        <taxon>Pseudomonadota</taxon>
        <taxon>Gammaproteobacteria</taxon>
        <taxon>Alteromonadales</taxon>
        <taxon>Shewanellaceae</taxon>
        <taxon>Shewanella</taxon>
    </lineage>
</organism>
<dbReference type="EC" id="2.1.1.228" evidence="1"/>
<dbReference type="EMBL" id="CP000302">
    <property type="protein sequence ID" value="ABE56031.1"/>
    <property type="molecule type" value="Genomic_DNA"/>
</dbReference>
<dbReference type="RefSeq" id="WP_011497181.1">
    <property type="nucleotide sequence ID" value="NC_007954.1"/>
</dbReference>
<dbReference type="SMR" id="Q12KJ5"/>
<dbReference type="STRING" id="318161.Sden_2752"/>
<dbReference type="KEGG" id="sdn:Sden_2752"/>
<dbReference type="eggNOG" id="COG0336">
    <property type="taxonomic scope" value="Bacteria"/>
</dbReference>
<dbReference type="HOGENOM" id="CLU_047363_0_1_6"/>
<dbReference type="OrthoDB" id="9807416at2"/>
<dbReference type="Proteomes" id="UP000001982">
    <property type="component" value="Chromosome"/>
</dbReference>
<dbReference type="GO" id="GO:0005829">
    <property type="term" value="C:cytosol"/>
    <property type="evidence" value="ECO:0007669"/>
    <property type="project" value="TreeGrafter"/>
</dbReference>
<dbReference type="GO" id="GO:0052906">
    <property type="term" value="F:tRNA (guanine(37)-N1)-methyltransferase activity"/>
    <property type="evidence" value="ECO:0007669"/>
    <property type="project" value="UniProtKB-UniRule"/>
</dbReference>
<dbReference type="GO" id="GO:0002939">
    <property type="term" value="P:tRNA N1-guanine methylation"/>
    <property type="evidence" value="ECO:0007669"/>
    <property type="project" value="TreeGrafter"/>
</dbReference>
<dbReference type="CDD" id="cd18080">
    <property type="entry name" value="TrmD-like"/>
    <property type="match status" value="1"/>
</dbReference>
<dbReference type="FunFam" id="1.10.1270.20:FF:000001">
    <property type="entry name" value="tRNA (guanine-N(1)-)-methyltransferase"/>
    <property type="match status" value="1"/>
</dbReference>
<dbReference type="FunFam" id="3.40.1280.10:FF:000001">
    <property type="entry name" value="tRNA (guanine-N(1)-)-methyltransferase"/>
    <property type="match status" value="1"/>
</dbReference>
<dbReference type="Gene3D" id="3.40.1280.10">
    <property type="match status" value="1"/>
</dbReference>
<dbReference type="Gene3D" id="1.10.1270.20">
    <property type="entry name" value="tRNA(m1g37)methyltransferase, domain 2"/>
    <property type="match status" value="1"/>
</dbReference>
<dbReference type="HAMAP" id="MF_00605">
    <property type="entry name" value="TrmD"/>
    <property type="match status" value="1"/>
</dbReference>
<dbReference type="InterPro" id="IPR029028">
    <property type="entry name" value="Alpha/beta_knot_MTases"/>
</dbReference>
<dbReference type="InterPro" id="IPR023148">
    <property type="entry name" value="tRNA_m1G_MeTrfase_C_sf"/>
</dbReference>
<dbReference type="InterPro" id="IPR002649">
    <property type="entry name" value="tRNA_m1G_MeTrfase_TrmD"/>
</dbReference>
<dbReference type="InterPro" id="IPR029026">
    <property type="entry name" value="tRNA_m1G_MTases_N"/>
</dbReference>
<dbReference type="InterPro" id="IPR016009">
    <property type="entry name" value="tRNA_MeTrfase_TRMD/TRM10"/>
</dbReference>
<dbReference type="NCBIfam" id="NF000648">
    <property type="entry name" value="PRK00026.1"/>
    <property type="match status" value="1"/>
</dbReference>
<dbReference type="NCBIfam" id="TIGR00088">
    <property type="entry name" value="trmD"/>
    <property type="match status" value="1"/>
</dbReference>
<dbReference type="PANTHER" id="PTHR46417">
    <property type="entry name" value="TRNA (GUANINE-N(1)-)-METHYLTRANSFERASE"/>
    <property type="match status" value="1"/>
</dbReference>
<dbReference type="PANTHER" id="PTHR46417:SF1">
    <property type="entry name" value="TRNA (GUANINE-N(1)-)-METHYLTRANSFERASE"/>
    <property type="match status" value="1"/>
</dbReference>
<dbReference type="Pfam" id="PF01746">
    <property type="entry name" value="tRNA_m1G_MT"/>
    <property type="match status" value="1"/>
</dbReference>
<dbReference type="PIRSF" id="PIRSF000386">
    <property type="entry name" value="tRNA_mtase"/>
    <property type="match status" value="1"/>
</dbReference>
<dbReference type="SUPFAM" id="SSF75217">
    <property type="entry name" value="alpha/beta knot"/>
    <property type="match status" value="1"/>
</dbReference>
<gene>
    <name evidence="1" type="primary">trmD</name>
    <name type="ordered locus">Sden_2752</name>
</gene>
<name>TRMD_SHEDO</name>
<proteinExistence type="inferred from homology"/>
<accession>Q12KJ5</accession>
<protein>
    <recommendedName>
        <fullName evidence="1">tRNA (guanine-N(1)-)-methyltransferase</fullName>
        <ecNumber evidence="1">2.1.1.228</ecNumber>
    </recommendedName>
    <alternativeName>
        <fullName evidence="1">M1G-methyltransferase</fullName>
    </alternativeName>
    <alternativeName>
        <fullName evidence="1">tRNA [GM37] methyltransferase</fullName>
    </alternativeName>
</protein>
<reference key="1">
    <citation type="submission" date="2006-03" db="EMBL/GenBank/DDBJ databases">
        <title>Complete sequence of Shewanella denitrificans OS217.</title>
        <authorList>
            <consortium name="US DOE Joint Genome Institute"/>
            <person name="Copeland A."/>
            <person name="Lucas S."/>
            <person name="Lapidus A."/>
            <person name="Barry K."/>
            <person name="Detter J.C."/>
            <person name="Glavina del Rio T."/>
            <person name="Hammon N."/>
            <person name="Israni S."/>
            <person name="Dalin E."/>
            <person name="Tice H."/>
            <person name="Pitluck S."/>
            <person name="Brettin T."/>
            <person name="Bruce D."/>
            <person name="Han C."/>
            <person name="Tapia R."/>
            <person name="Gilna P."/>
            <person name="Kiss H."/>
            <person name="Schmutz J."/>
            <person name="Larimer F."/>
            <person name="Land M."/>
            <person name="Hauser L."/>
            <person name="Kyrpides N."/>
            <person name="Lykidis A."/>
            <person name="Richardson P."/>
        </authorList>
    </citation>
    <scope>NUCLEOTIDE SEQUENCE [LARGE SCALE GENOMIC DNA]</scope>
    <source>
        <strain>OS217 / ATCC BAA-1090 / DSM 15013</strain>
    </source>
</reference>
<comment type="function">
    <text evidence="1">Specifically methylates guanosine-37 in various tRNAs.</text>
</comment>
<comment type="catalytic activity">
    <reaction evidence="1">
        <text>guanosine(37) in tRNA + S-adenosyl-L-methionine = N(1)-methylguanosine(37) in tRNA + S-adenosyl-L-homocysteine + H(+)</text>
        <dbReference type="Rhea" id="RHEA:36899"/>
        <dbReference type="Rhea" id="RHEA-COMP:10145"/>
        <dbReference type="Rhea" id="RHEA-COMP:10147"/>
        <dbReference type="ChEBI" id="CHEBI:15378"/>
        <dbReference type="ChEBI" id="CHEBI:57856"/>
        <dbReference type="ChEBI" id="CHEBI:59789"/>
        <dbReference type="ChEBI" id="CHEBI:73542"/>
        <dbReference type="ChEBI" id="CHEBI:74269"/>
        <dbReference type="EC" id="2.1.1.228"/>
    </reaction>
</comment>
<comment type="subunit">
    <text evidence="1">Homodimer.</text>
</comment>
<comment type="subcellular location">
    <subcellularLocation>
        <location evidence="1">Cytoplasm</location>
    </subcellularLocation>
</comment>
<comment type="similarity">
    <text evidence="1">Belongs to the RNA methyltransferase TrmD family.</text>
</comment>
<sequence length="248" mass="27430">MWLGVITLFPEMFRAVTDFGVTGRAVKNGLLELHTWNPRDFTHDRHSTVDDRPYGGGPGMLMMVQPLRDAIHAAKAAAGDGAKVIYLSPQGRKLDQHGVTELAKSDSLILVCGRYEGVDERIIQTEVDEEWSIGDYVLSGGELPAMTLIDSVARLVPGVLGKQASAEQDSFSEGLLDCPHYTRPEQLDGMDVPAVLLSGDHEKIRLWRLQQSIGRTFLRRPELFENLALTDEQTTLLAQFVNDTDKSA</sequence>
<evidence type="ECO:0000255" key="1">
    <source>
        <dbReference type="HAMAP-Rule" id="MF_00605"/>
    </source>
</evidence>
<keyword id="KW-0963">Cytoplasm</keyword>
<keyword id="KW-0489">Methyltransferase</keyword>
<keyword id="KW-1185">Reference proteome</keyword>
<keyword id="KW-0949">S-adenosyl-L-methionine</keyword>
<keyword id="KW-0808">Transferase</keyword>
<keyword id="KW-0819">tRNA processing</keyword>
<feature type="chain" id="PRO_1000006515" description="tRNA (guanine-N(1)-)-methyltransferase">
    <location>
        <begin position="1"/>
        <end position="248"/>
    </location>
</feature>
<feature type="binding site" evidence="1">
    <location>
        <position position="113"/>
    </location>
    <ligand>
        <name>S-adenosyl-L-methionine</name>
        <dbReference type="ChEBI" id="CHEBI:59789"/>
    </ligand>
</feature>
<feature type="binding site" evidence="1">
    <location>
        <begin position="133"/>
        <end position="138"/>
    </location>
    <ligand>
        <name>S-adenosyl-L-methionine</name>
        <dbReference type="ChEBI" id="CHEBI:59789"/>
    </ligand>
</feature>